<comment type="function">
    <text evidence="1">Component of the acetyl coenzyme A carboxylase (ACC) complex. Biotin carboxylase (BC) catalyzes the carboxylation of biotin on its carrier protein (BCCP) and then the CO(2) group is transferred by the transcarboxylase to acetyl-CoA to form malonyl-CoA.</text>
</comment>
<comment type="catalytic activity">
    <reaction evidence="1">
        <text>N(6)-carboxybiotinyl-L-lysyl-[protein] + acetyl-CoA = N(6)-biotinyl-L-lysyl-[protein] + malonyl-CoA</text>
        <dbReference type="Rhea" id="RHEA:54728"/>
        <dbReference type="Rhea" id="RHEA-COMP:10505"/>
        <dbReference type="Rhea" id="RHEA-COMP:10506"/>
        <dbReference type="ChEBI" id="CHEBI:57288"/>
        <dbReference type="ChEBI" id="CHEBI:57384"/>
        <dbReference type="ChEBI" id="CHEBI:83144"/>
        <dbReference type="ChEBI" id="CHEBI:83145"/>
        <dbReference type="EC" id="2.1.3.15"/>
    </reaction>
</comment>
<comment type="cofactor">
    <cofactor evidence="1">
        <name>Zn(2+)</name>
        <dbReference type="ChEBI" id="CHEBI:29105"/>
    </cofactor>
    <text evidence="1">Binds 1 zinc ion per subunit.</text>
</comment>
<comment type="pathway">
    <text evidence="1">Lipid metabolism; malonyl-CoA biosynthesis; malonyl-CoA from acetyl-CoA: step 1/1.</text>
</comment>
<comment type="subunit">
    <text evidence="1">Acetyl-CoA carboxylase is a heterohexamer composed of biotin carboxyl carrier protein (AccB), biotin carboxylase (AccC) and two subunits each of ACCase subunit alpha (AccA) and ACCase subunit beta (AccD).</text>
</comment>
<comment type="subcellular location">
    <subcellularLocation>
        <location evidence="1">Cytoplasm</location>
    </subcellularLocation>
</comment>
<comment type="similarity">
    <text evidence="1">Belongs to the AccD/PCCB family.</text>
</comment>
<feature type="chain" id="PRO_0000358972" description="Acetyl-coenzyme A carboxylase carboxyl transferase subunit beta">
    <location>
        <begin position="1"/>
        <end position="292"/>
    </location>
</feature>
<feature type="domain" description="CoA carboxyltransferase N-terminal" evidence="2">
    <location>
        <begin position="36"/>
        <end position="292"/>
    </location>
</feature>
<feature type="zinc finger region" description="C4-type" evidence="1">
    <location>
        <begin position="40"/>
        <end position="62"/>
    </location>
</feature>
<feature type="binding site" evidence="1">
    <location>
        <position position="40"/>
    </location>
    <ligand>
        <name>Zn(2+)</name>
        <dbReference type="ChEBI" id="CHEBI:29105"/>
    </ligand>
</feature>
<feature type="binding site" evidence="1">
    <location>
        <position position="43"/>
    </location>
    <ligand>
        <name>Zn(2+)</name>
        <dbReference type="ChEBI" id="CHEBI:29105"/>
    </ligand>
</feature>
<feature type="binding site" evidence="1">
    <location>
        <position position="59"/>
    </location>
    <ligand>
        <name>Zn(2+)</name>
        <dbReference type="ChEBI" id="CHEBI:29105"/>
    </ligand>
</feature>
<feature type="binding site" evidence="1">
    <location>
        <position position="62"/>
    </location>
    <ligand>
        <name>Zn(2+)</name>
        <dbReference type="ChEBI" id="CHEBI:29105"/>
    </ligand>
</feature>
<protein>
    <recommendedName>
        <fullName evidence="1">Acetyl-coenzyme A carboxylase carboxyl transferase subunit beta</fullName>
        <shortName evidence="1">ACCase subunit beta</shortName>
        <shortName evidence="1">Acetyl-CoA carboxylase carboxyltransferase subunit beta</shortName>
        <ecNumber evidence="1">2.1.3.15</ecNumber>
    </recommendedName>
</protein>
<keyword id="KW-0067">ATP-binding</keyword>
<keyword id="KW-0963">Cytoplasm</keyword>
<keyword id="KW-0275">Fatty acid biosynthesis</keyword>
<keyword id="KW-0276">Fatty acid metabolism</keyword>
<keyword id="KW-0444">Lipid biosynthesis</keyword>
<keyword id="KW-0443">Lipid metabolism</keyword>
<keyword id="KW-0479">Metal-binding</keyword>
<keyword id="KW-0547">Nucleotide-binding</keyword>
<keyword id="KW-0808">Transferase</keyword>
<keyword id="KW-0862">Zinc</keyword>
<keyword id="KW-0863">Zinc-finger</keyword>
<reference key="1">
    <citation type="journal article" date="2006" name="Genome Res.">
        <title>Skewed genomic variability in strains of the toxigenic bacterial pathogen, Clostridium perfringens.</title>
        <authorList>
            <person name="Myers G.S.A."/>
            <person name="Rasko D.A."/>
            <person name="Cheung J.K."/>
            <person name="Ravel J."/>
            <person name="Seshadri R."/>
            <person name="DeBoy R.T."/>
            <person name="Ren Q."/>
            <person name="Varga J."/>
            <person name="Awad M.M."/>
            <person name="Brinkac L.M."/>
            <person name="Daugherty S.C."/>
            <person name="Haft D.H."/>
            <person name="Dodson R.J."/>
            <person name="Madupu R."/>
            <person name="Nelson W.C."/>
            <person name="Rosovitz M.J."/>
            <person name="Sullivan S.A."/>
            <person name="Khouri H."/>
            <person name="Dimitrov G.I."/>
            <person name="Watkins K.L."/>
            <person name="Mulligan S."/>
            <person name="Benton J."/>
            <person name="Radune D."/>
            <person name="Fisher D.J."/>
            <person name="Atkins H.S."/>
            <person name="Hiscox T."/>
            <person name="Jost B.H."/>
            <person name="Billington S.J."/>
            <person name="Songer J.G."/>
            <person name="McClane B.A."/>
            <person name="Titball R.W."/>
            <person name="Rood J.I."/>
            <person name="Melville S.B."/>
            <person name="Paulsen I.T."/>
        </authorList>
    </citation>
    <scope>NUCLEOTIDE SEQUENCE [LARGE SCALE GENOMIC DNA]</scope>
    <source>
        <strain>ATCC 13124 / DSM 756 / JCM 1290 / NCIMB 6125 / NCTC 8237 / S 107 / Type A</strain>
    </source>
</reference>
<dbReference type="EC" id="2.1.3.15" evidence="1"/>
<dbReference type="EMBL" id="CP000246">
    <property type="protein sequence ID" value="ABG82303.1"/>
    <property type="molecule type" value="Genomic_DNA"/>
</dbReference>
<dbReference type="RefSeq" id="WP_003458574.1">
    <property type="nucleotide sequence ID" value="NC_008261.1"/>
</dbReference>
<dbReference type="SMR" id="Q0TRG3"/>
<dbReference type="STRING" id="195103.CPF_1331"/>
<dbReference type="PaxDb" id="195103-CPF_1331"/>
<dbReference type="GeneID" id="93002356"/>
<dbReference type="KEGG" id="cpf:CPF_1331"/>
<dbReference type="eggNOG" id="COG0777">
    <property type="taxonomic scope" value="Bacteria"/>
</dbReference>
<dbReference type="HOGENOM" id="CLU_015486_1_0_9"/>
<dbReference type="UniPathway" id="UPA00655">
    <property type="reaction ID" value="UER00711"/>
</dbReference>
<dbReference type="Proteomes" id="UP000001823">
    <property type="component" value="Chromosome"/>
</dbReference>
<dbReference type="GO" id="GO:0009317">
    <property type="term" value="C:acetyl-CoA carboxylase complex"/>
    <property type="evidence" value="ECO:0007669"/>
    <property type="project" value="InterPro"/>
</dbReference>
<dbReference type="GO" id="GO:0003989">
    <property type="term" value="F:acetyl-CoA carboxylase activity"/>
    <property type="evidence" value="ECO:0007669"/>
    <property type="project" value="InterPro"/>
</dbReference>
<dbReference type="GO" id="GO:0005524">
    <property type="term" value="F:ATP binding"/>
    <property type="evidence" value="ECO:0007669"/>
    <property type="project" value="UniProtKB-KW"/>
</dbReference>
<dbReference type="GO" id="GO:0016743">
    <property type="term" value="F:carboxyl- or carbamoyltransferase activity"/>
    <property type="evidence" value="ECO:0007669"/>
    <property type="project" value="UniProtKB-UniRule"/>
</dbReference>
<dbReference type="GO" id="GO:0008270">
    <property type="term" value="F:zinc ion binding"/>
    <property type="evidence" value="ECO:0007669"/>
    <property type="project" value="UniProtKB-UniRule"/>
</dbReference>
<dbReference type="GO" id="GO:0006633">
    <property type="term" value="P:fatty acid biosynthetic process"/>
    <property type="evidence" value="ECO:0007669"/>
    <property type="project" value="UniProtKB-KW"/>
</dbReference>
<dbReference type="GO" id="GO:2001295">
    <property type="term" value="P:malonyl-CoA biosynthetic process"/>
    <property type="evidence" value="ECO:0007669"/>
    <property type="project" value="UniProtKB-UniRule"/>
</dbReference>
<dbReference type="Gene3D" id="3.90.226.10">
    <property type="entry name" value="2-enoyl-CoA Hydratase, Chain A, domain 1"/>
    <property type="match status" value="1"/>
</dbReference>
<dbReference type="HAMAP" id="MF_01395">
    <property type="entry name" value="AcetylCoA_CT_beta"/>
    <property type="match status" value="1"/>
</dbReference>
<dbReference type="InterPro" id="IPR034733">
    <property type="entry name" value="AcCoA_carboxyl_beta"/>
</dbReference>
<dbReference type="InterPro" id="IPR000438">
    <property type="entry name" value="Acetyl_CoA_COase_Trfase_b_su"/>
</dbReference>
<dbReference type="InterPro" id="IPR029045">
    <property type="entry name" value="ClpP/crotonase-like_dom_sf"/>
</dbReference>
<dbReference type="InterPro" id="IPR011762">
    <property type="entry name" value="COA_CT_N"/>
</dbReference>
<dbReference type="InterPro" id="IPR041010">
    <property type="entry name" value="Znf-ACC"/>
</dbReference>
<dbReference type="NCBIfam" id="TIGR00515">
    <property type="entry name" value="accD"/>
    <property type="match status" value="1"/>
</dbReference>
<dbReference type="PANTHER" id="PTHR42995">
    <property type="entry name" value="ACETYL-COENZYME A CARBOXYLASE CARBOXYL TRANSFERASE SUBUNIT BETA, CHLOROPLASTIC"/>
    <property type="match status" value="1"/>
</dbReference>
<dbReference type="PANTHER" id="PTHR42995:SF5">
    <property type="entry name" value="ACETYL-COENZYME A CARBOXYLASE CARBOXYL TRANSFERASE SUBUNIT BETA, CHLOROPLASTIC"/>
    <property type="match status" value="1"/>
</dbReference>
<dbReference type="Pfam" id="PF01039">
    <property type="entry name" value="Carboxyl_trans"/>
    <property type="match status" value="1"/>
</dbReference>
<dbReference type="Pfam" id="PF17848">
    <property type="entry name" value="Zn_ribbon_ACC"/>
    <property type="match status" value="1"/>
</dbReference>
<dbReference type="PRINTS" id="PR01070">
    <property type="entry name" value="ACCCTRFRASEB"/>
</dbReference>
<dbReference type="SUPFAM" id="SSF52096">
    <property type="entry name" value="ClpP/crotonase"/>
    <property type="match status" value="1"/>
</dbReference>
<dbReference type="PROSITE" id="PS50980">
    <property type="entry name" value="COA_CT_NTER"/>
    <property type="match status" value="1"/>
</dbReference>
<accession>Q0TRG3</accession>
<proteinExistence type="inferred from homology"/>
<organism>
    <name type="scientific">Clostridium perfringens (strain ATCC 13124 / DSM 756 / JCM 1290 / NCIMB 6125 / NCTC 8237 / Type A)</name>
    <dbReference type="NCBI Taxonomy" id="195103"/>
    <lineage>
        <taxon>Bacteria</taxon>
        <taxon>Bacillati</taxon>
        <taxon>Bacillota</taxon>
        <taxon>Clostridia</taxon>
        <taxon>Eubacteriales</taxon>
        <taxon>Clostridiaceae</taxon>
        <taxon>Clostridium</taxon>
    </lineage>
</organism>
<gene>
    <name evidence="1" type="primary">accD</name>
    <name type="ordered locus">CPF_1331</name>
</gene>
<name>ACCD_CLOP1</name>
<evidence type="ECO:0000255" key="1">
    <source>
        <dbReference type="HAMAP-Rule" id="MF_01395"/>
    </source>
</evidence>
<evidence type="ECO:0000255" key="2">
    <source>
        <dbReference type="PROSITE-ProRule" id="PRU01136"/>
    </source>
</evidence>
<sequence length="292" mass="33030">MIKNLLNKRKYITVSSVELNDTELNEDEKPNIPSGMWSKCEKCAKILYTEDLRENFNVCPNCGHHFKLGAYERIKYLTDENTFVEFDKKMVGRNPLDFNGYEEKIKGYQKKSHVIEGVVTGEAYIAQRKVVLCVMDSNFMMGSMGTAVGEKITRAIEYATKNRLPLIIFTCSGGARMQEGIYSLMQMAKVSGAIYRHGRENLLYITVLTNPTTGGVTASFAMEGDIILSEPGCLVGFAGRRVIEGTINEKLPDDFQTAEFLLEKGFIDKIVQRKDLKQVITSLLRMHEVDYE</sequence>